<evidence type="ECO:0000250" key="1">
    <source>
        <dbReference type="UniProtKB" id="A2R2S8"/>
    </source>
</evidence>
<evidence type="ECO:0000250" key="2">
    <source>
        <dbReference type="UniProtKB" id="Q873Y0"/>
    </source>
</evidence>
<evidence type="ECO:0000255" key="3"/>
<evidence type="ECO:0000255" key="4">
    <source>
        <dbReference type="PROSITE-ProRule" id="PRU00498"/>
    </source>
</evidence>
<evidence type="ECO:0000255" key="5">
    <source>
        <dbReference type="PROSITE-ProRule" id="PRU01258"/>
    </source>
</evidence>
<evidence type="ECO:0000256" key="6">
    <source>
        <dbReference type="SAM" id="MobiDB-lite"/>
    </source>
</evidence>
<evidence type="ECO:0000305" key="7"/>
<evidence type="ECO:0000312" key="8">
    <source>
        <dbReference type="Proteomes" id="UP000008866"/>
    </source>
</evidence>
<comment type="function">
    <text evidence="1 2">GPI-anchored chitinase involved in the degradation of chitin, a component of the cell walls of fungi and exoskeletal elements of some animals (including worms and arthropods). Required to reshape the cell wall at the sites where cell wall remodeling and/or cell wall maturation actively take place such as sites of conidia formation.</text>
</comment>
<comment type="catalytic activity">
    <reaction evidence="2">
        <text>Random endo-hydrolysis of N-acetyl-beta-D-glucosaminide (1-&gt;4)-beta-linkages in chitin and chitodextrins.</text>
        <dbReference type="EC" id="3.2.1.14"/>
    </reaction>
</comment>
<comment type="subcellular location">
    <subcellularLocation>
        <location evidence="7">Cell membrane</location>
        <topology evidence="3">Lipid-anchor</topology>
        <topology evidence="3">GPI-anchor</topology>
    </subcellularLocation>
    <subcellularLocation>
        <location evidence="2">Secreted</location>
        <location evidence="2">Cell wall</location>
    </subcellularLocation>
</comment>
<comment type="similarity">
    <text evidence="7">Belongs to the glycosyl hydrolase 18 family. Chitinase class III subfamily.</text>
</comment>
<reference key="1">
    <citation type="journal article" date="2011" name="Genome Biol.">
        <title>Comparative and functional genomics provide insights into the pathogenicity of dermatophytic fungi.</title>
        <authorList>
            <person name="Burmester A."/>
            <person name="Shelest E."/>
            <person name="Gloeckner G."/>
            <person name="Heddergott C."/>
            <person name="Schindler S."/>
            <person name="Staib P."/>
            <person name="Heidel A."/>
            <person name="Felder M."/>
            <person name="Petzold A."/>
            <person name="Szafranski K."/>
            <person name="Feuermann M."/>
            <person name="Pedruzzi I."/>
            <person name="Priebe S."/>
            <person name="Groth M."/>
            <person name="Winkler R."/>
            <person name="Li W."/>
            <person name="Kniemeyer O."/>
            <person name="Schroeckh V."/>
            <person name="Hertweck C."/>
            <person name="Hube B."/>
            <person name="White T.C."/>
            <person name="Platzer M."/>
            <person name="Guthke R."/>
            <person name="Heitman J."/>
            <person name="Woestemeyer J."/>
            <person name="Zipfel P.F."/>
            <person name="Monod M."/>
            <person name="Brakhage A.A."/>
        </authorList>
    </citation>
    <scope>NUCLEOTIDE SEQUENCE [LARGE SCALE GENOMIC DNA]</scope>
    <source>
        <strain evidence="8">ATCC MYA-4681 / CBS 112371</strain>
    </source>
</reference>
<accession>D4AT07</accession>
<proteinExistence type="inferred from homology"/>
<organism>
    <name type="scientific">Arthroderma benhamiae (strain ATCC MYA-4681 / CBS 112371)</name>
    <name type="common">Trichophyton mentagrophytes</name>
    <dbReference type="NCBI Taxonomy" id="663331"/>
    <lineage>
        <taxon>Eukaryota</taxon>
        <taxon>Fungi</taxon>
        <taxon>Dikarya</taxon>
        <taxon>Ascomycota</taxon>
        <taxon>Pezizomycotina</taxon>
        <taxon>Eurotiomycetes</taxon>
        <taxon>Eurotiomycetidae</taxon>
        <taxon>Onygenales</taxon>
        <taxon>Arthrodermataceae</taxon>
        <taxon>Trichophyton</taxon>
    </lineage>
</organism>
<sequence>MALPKTIMAFIAFISFLVSTTFAVDVFSTTNVVTYWGQGHDQKRLSHYCQQAEHDIIVIGFVNVFPDQGKGGWPGTNFGNQCFMGTYITPEGEETELLSSCHKIIEDIPICKAAGKTIMLSLGGQAVDGSKTYSVKTRQSAVYFADFLWRAFGPVSPEWDGPRPFGDNVIDGFDFDIEANGGANYEYMVERLRSNFATDSSRQYYLSAAPQCVLPDGNLGNVISSSAFDFIFVQFYNTPSCSAFNWAQNPSKSGFTFDSWVQFIRKGASRNAKLFIGLVGDHTRVSPHGEYTKDDSNYLALPDADKLIKAYMNKYRANFGGVMIWDALTSDENKLVTGTYSSNIKRLLLNNDPSRPTTTSKTMSSTKTSMSTTTSKYTVTTSTISSTSKISSSTWSMPTMTTSTRTTSSTATRSSTIVTPSTSPNPTTSTSTTSGHQNTTATTTEIETQTSKTFITTTSIWSSGTGIGTCTGIPTITTTPRYPNATFTSDTTGSPTMSDTTITLSVTSSMHQISDTTTTIPTFSTTPIQTSDISLSMPSGTTTSKHQSSGITIPGPPHMSTTIVPASPTKPGHSTTTAIVTTTFTSVCPTGITTVTTTYTTIYCPEATPMPTAGNPPPPPGMEWTTIVTTCTKCASTSAIMTVTYPVTVPSEPMTPTQVPGTLPPPGAPGTGSGIPPPKTPSNEPGSPGTLTGIFPPKPTMSVPPEMGGNGGDRTPVYTGGAGVVSPSFSVVVIVLGSIVYHIMQ</sequence>
<feature type="signal peptide" evidence="3">
    <location>
        <begin position="1"/>
        <end position="23"/>
    </location>
</feature>
<feature type="chain" id="PRO_0000434414" description="Probable endochitinase ARB_07371" evidence="3">
    <location>
        <begin position="24"/>
        <end position="720"/>
    </location>
</feature>
<feature type="propeptide" id="PRO_0000434415" description="Removed in mature form" evidence="2">
    <location>
        <begin position="721"/>
        <end position="745"/>
    </location>
</feature>
<feature type="domain" description="GH18" evidence="5">
    <location>
        <begin position="30"/>
        <end position="351"/>
    </location>
</feature>
<feature type="region of interest" description="Disordered" evidence="6">
    <location>
        <begin position="351"/>
        <end position="372"/>
    </location>
</feature>
<feature type="region of interest" description="Disordered" evidence="6">
    <location>
        <begin position="395"/>
        <end position="446"/>
    </location>
</feature>
<feature type="region of interest" description="Disordered" evidence="6">
    <location>
        <begin position="651"/>
        <end position="715"/>
    </location>
</feature>
<feature type="compositionally biased region" description="Low complexity" evidence="6">
    <location>
        <begin position="357"/>
        <end position="372"/>
    </location>
</feature>
<feature type="active site" description="Proton donor" evidence="5">
    <location>
        <position position="178"/>
    </location>
</feature>
<feature type="lipid moiety-binding region" description="GPI-anchor amidated glycine" evidence="3">
    <location>
        <position position="720"/>
    </location>
</feature>
<feature type="glycosylation site" description="N-linked (GlcNAc...) asparagine" evidence="4">
    <location>
        <position position="438"/>
    </location>
</feature>
<feature type="glycosylation site" description="N-linked (GlcNAc...) asparagine" evidence="4">
    <location>
        <position position="484"/>
    </location>
</feature>
<protein>
    <recommendedName>
        <fullName evidence="7">Probable endochitinase ARB_07371</fullName>
        <ecNumber evidence="2">3.2.1.14</ecNumber>
    </recommendedName>
</protein>
<name>CHI1_ARTBC</name>
<keyword id="KW-0119">Carbohydrate metabolism</keyword>
<keyword id="KW-1003">Cell membrane</keyword>
<keyword id="KW-0134">Cell wall</keyword>
<keyword id="KW-0146">Chitin degradation</keyword>
<keyword id="KW-0147">Chitin-binding</keyword>
<keyword id="KW-0325">Glycoprotein</keyword>
<keyword id="KW-0326">Glycosidase</keyword>
<keyword id="KW-0336">GPI-anchor</keyword>
<keyword id="KW-0378">Hydrolase</keyword>
<keyword id="KW-0449">Lipoprotein</keyword>
<keyword id="KW-0472">Membrane</keyword>
<keyword id="KW-0624">Polysaccharide degradation</keyword>
<keyword id="KW-1185">Reference proteome</keyword>
<keyword id="KW-0964">Secreted</keyword>
<keyword id="KW-0732">Signal</keyword>
<dbReference type="EC" id="3.2.1.14" evidence="2"/>
<dbReference type="EMBL" id="ABSU01000008">
    <property type="protein sequence ID" value="EFE33907.1"/>
    <property type="molecule type" value="Genomic_DNA"/>
</dbReference>
<dbReference type="RefSeq" id="XP_003014810.1">
    <property type="nucleotide sequence ID" value="XM_003014764.1"/>
</dbReference>
<dbReference type="SMR" id="D4AT07"/>
<dbReference type="STRING" id="663331.D4AT07"/>
<dbReference type="GeneID" id="9520347"/>
<dbReference type="KEGG" id="abe:ARB_07371"/>
<dbReference type="eggNOG" id="KOG4701">
    <property type="taxonomic scope" value="Eukaryota"/>
</dbReference>
<dbReference type="HOGENOM" id="CLU_007818_8_1_1"/>
<dbReference type="OMA" id="GTTCFAY"/>
<dbReference type="OrthoDB" id="6020543at2759"/>
<dbReference type="Proteomes" id="UP000008866">
    <property type="component" value="Unassembled WGS sequence"/>
</dbReference>
<dbReference type="GO" id="GO:0005576">
    <property type="term" value="C:extracellular region"/>
    <property type="evidence" value="ECO:0007669"/>
    <property type="project" value="UniProtKB-KW"/>
</dbReference>
<dbReference type="GO" id="GO:0005886">
    <property type="term" value="C:plasma membrane"/>
    <property type="evidence" value="ECO:0007669"/>
    <property type="project" value="UniProtKB-SubCell"/>
</dbReference>
<dbReference type="GO" id="GO:0098552">
    <property type="term" value="C:side of membrane"/>
    <property type="evidence" value="ECO:0007669"/>
    <property type="project" value="UniProtKB-KW"/>
</dbReference>
<dbReference type="GO" id="GO:0008061">
    <property type="term" value="F:chitin binding"/>
    <property type="evidence" value="ECO:0007669"/>
    <property type="project" value="UniProtKB-KW"/>
</dbReference>
<dbReference type="GO" id="GO:0008843">
    <property type="term" value="F:endochitinase activity"/>
    <property type="evidence" value="ECO:0007669"/>
    <property type="project" value="UniProtKB-EC"/>
</dbReference>
<dbReference type="GO" id="GO:0006032">
    <property type="term" value="P:chitin catabolic process"/>
    <property type="evidence" value="ECO:0007669"/>
    <property type="project" value="UniProtKB-KW"/>
</dbReference>
<dbReference type="GO" id="GO:0000272">
    <property type="term" value="P:polysaccharide catabolic process"/>
    <property type="evidence" value="ECO:0007669"/>
    <property type="project" value="UniProtKB-KW"/>
</dbReference>
<dbReference type="CDD" id="cd02877">
    <property type="entry name" value="GH18_hevamine_XipI_class_III"/>
    <property type="match status" value="1"/>
</dbReference>
<dbReference type="Gene3D" id="3.20.20.80">
    <property type="entry name" value="Glycosidases"/>
    <property type="match status" value="1"/>
</dbReference>
<dbReference type="InterPro" id="IPR045321">
    <property type="entry name" value="Cts1-like"/>
</dbReference>
<dbReference type="InterPro" id="IPR001223">
    <property type="entry name" value="Glyco_hydro18_cat"/>
</dbReference>
<dbReference type="InterPro" id="IPR001579">
    <property type="entry name" value="Glyco_hydro_18_chit_AS"/>
</dbReference>
<dbReference type="InterPro" id="IPR017853">
    <property type="entry name" value="Glycoside_hydrolase_SF"/>
</dbReference>
<dbReference type="InterPro" id="IPR050542">
    <property type="entry name" value="Glycosyl_Hydrlase18_Chitinase"/>
</dbReference>
<dbReference type="PANTHER" id="PTHR45708">
    <property type="entry name" value="ENDOCHITINASE"/>
    <property type="match status" value="1"/>
</dbReference>
<dbReference type="PANTHER" id="PTHR45708:SF47">
    <property type="entry name" value="ENDOCHITINASE A"/>
    <property type="match status" value="1"/>
</dbReference>
<dbReference type="Pfam" id="PF00704">
    <property type="entry name" value="Glyco_hydro_18"/>
    <property type="match status" value="1"/>
</dbReference>
<dbReference type="SUPFAM" id="SSF51445">
    <property type="entry name" value="(Trans)glycosidases"/>
    <property type="match status" value="1"/>
</dbReference>
<dbReference type="PROSITE" id="PS01095">
    <property type="entry name" value="GH18_1"/>
    <property type="match status" value="1"/>
</dbReference>
<dbReference type="PROSITE" id="PS51910">
    <property type="entry name" value="GH18_2"/>
    <property type="match status" value="1"/>
</dbReference>
<gene>
    <name type="ORF">ARB_07371</name>
</gene>